<organism>
    <name type="scientific">Schistosoma mansoni</name>
    <name type="common">Blood fluke</name>
    <dbReference type="NCBI Taxonomy" id="6183"/>
    <lineage>
        <taxon>Eukaryota</taxon>
        <taxon>Metazoa</taxon>
        <taxon>Spiralia</taxon>
        <taxon>Lophotrochozoa</taxon>
        <taxon>Platyhelminthes</taxon>
        <taxon>Trematoda</taxon>
        <taxon>Digenea</taxon>
        <taxon>Strigeidida</taxon>
        <taxon>Schistosomatoidea</taxon>
        <taxon>Schistosomatidae</taxon>
        <taxon>Schistosoma</taxon>
    </lineage>
</organism>
<reference key="1">
    <citation type="journal article" date="1992" name="Mech. Dev.">
        <title>Conserved classes of homeodomains in Schistosoma mansoni, an early bilateral metazoan.</title>
        <authorList>
            <person name="Webster P.J."/>
            <person name="Mansour T.E."/>
        </authorList>
    </citation>
    <scope>NUCLEOTIDE SEQUENCE [MRNA]</scope>
    <source>
        <strain>Puerto Rican</strain>
    </source>
</reference>
<name>SMOX1_SCHMA</name>
<evidence type="ECO:0000255" key="1">
    <source>
        <dbReference type="PROSITE-ProRule" id="PRU00108"/>
    </source>
</evidence>
<evidence type="ECO:0000256" key="2">
    <source>
        <dbReference type="SAM" id="MobiDB-lite"/>
    </source>
</evidence>
<evidence type="ECO:0000305" key="3"/>
<dbReference type="EMBL" id="M85306">
    <property type="protein sequence ID" value="AAA29928.1"/>
    <property type="molecule type" value="mRNA"/>
</dbReference>
<dbReference type="PIR" id="S27840">
    <property type="entry name" value="S27840"/>
</dbReference>
<dbReference type="SMR" id="Q26600"/>
<dbReference type="STRING" id="6183.Q26600"/>
<dbReference type="eggNOG" id="KOG0489">
    <property type="taxonomic scope" value="Eukaryota"/>
</dbReference>
<dbReference type="HOGENOM" id="CLU_338126_0_0_1"/>
<dbReference type="InParanoid" id="Q26600"/>
<dbReference type="Proteomes" id="UP000008854">
    <property type="component" value="Unassembled WGS sequence"/>
</dbReference>
<dbReference type="GO" id="GO:0005634">
    <property type="term" value="C:nucleus"/>
    <property type="evidence" value="ECO:0007669"/>
    <property type="project" value="UniProtKB-SubCell"/>
</dbReference>
<dbReference type="GO" id="GO:0000981">
    <property type="term" value="F:DNA-binding transcription factor activity, RNA polymerase II-specific"/>
    <property type="evidence" value="ECO:0007669"/>
    <property type="project" value="TreeGrafter"/>
</dbReference>
<dbReference type="GO" id="GO:0000978">
    <property type="term" value="F:RNA polymerase II cis-regulatory region sequence-specific DNA binding"/>
    <property type="evidence" value="ECO:0007669"/>
    <property type="project" value="TreeGrafter"/>
</dbReference>
<dbReference type="GO" id="GO:0009952">
    <property type="term" value="P:anterior/posterior pattern specification"/>
    <property type="evidence" value="ECO:0007669"/>
    <property type="project" value="TreeGrafter"/>
</dbReference>
<dbReference type="CDD" id="cd00086">
    <property type="entry name" value="homeodomain"/>
    <property type="match status" value="1"/>
</dbReference>
<dbReference type="Gene3D" id="1.10.10.60">
    <property type="entry name" value="Homeodomain-like"/>
    <property type="match status" value="1"/>
</dbReference>
<dbReference type="InterPro" id="IPR050296">
    <property type="entry name" value="Antp_homeobox"/>
</dbReference>
<dbReference type="InterPro" id="IPR001356">
    <property type="entry name" value="HD"/>
</dbReference>
<dbReference type="InterPro" id="IPR020479">
    <property type="entry name" value="HD_metazoa"/>
</dbReference>
<dbReference type="InterPro" id="IPR017995">
    <property type="entry name" value="Homeobox_antennapedia"/>
</dbReference>
<dbReference type="InterPro" id="IPR009057">
    <property type="entry name" value="Homeodomain-like_sf"/>
</dbReference>
<dbReference type="PANTHER" id="PTHR45659">
    <property type="entry name" value="HOMEOBOX PROTEIN HOX"/>
    <property type="match status" value="1"/>
</dbReference>
<dbReference type="PANTHER" id="PTHR45659:SF10">
    <property type="entry name" value="HOMEOBOX PROTEIN HOX-A5"/>
    <property type="match status" value="1"/>
</dbReference>
<dbReference type="Pfam" id="PF00046">
    <property type="entry name" value="Homeodomain"/>
    <property type="match status" value="1"/>
</dbReference>
<dbReference type="PRINTS" id="PR00025">
    <property type="entry name" value="ANTENNAPEDIA"/>
</dbReference>
<dbReference type="PRINTS" id="PR00024">
    <property type="entry name" value="HOMEOBOX"/>
</dbReference>
<dbReference type="SMART" id="SM00389">
    <property type="entry name" value="HOX"/>
    <property type="match status" value="1"/>
</dbReference>
<dbReference type="SUPFAM" id="SSF46689">
    <property type="entry name" value="Homeodomain-like"/>
    <property type="match status" value="1"/>
</dbReference>
<dbReference type="PROSITE" id="PS50071">
    <property type="entry name" value="HOMEOBOX_2"/>
    <property type="match status" value="1"/>
</dbReference>
<feature type="chain" id="PRO_0000049310" description="Homeobox protein SMOX-1">
    <location>
        <begin position="1" status="less than"/>
        <end position="280" status="greater than"/>
    </location>
</feature>
<feature type="DNA-binding region" description="Homeobox" evidence="1">
    <location>
        <begin position="229"/>
        <end position="280" status="greater than"/>
    </location>
</feature>
<feature type="region of interest" description="Disordered" evidence="2">
    <location>
        <begin position="61"/>
        <end position="88"/>
    </location>
</feature>
<feature type="short sequence motif" description="Antp-type hexapeptide">
    <location>
        <begin position="214"/>
        <end position="219"/>
    </location>
</feature>
<feature type="compositionally biased region" description="Low complexity" evidence="2">
    <location>
        <begin position="69"/>
        <end position="85"/>
    </location>
</feature>
<feature type="non-terminal residue">
    <location>
        <position position="1"/>
    </location>
</feature>
<feature type="non-terminal residue">
    <location>
        <position position="280"/>
    </location>
</feature>
<protein>
    <recommendedName>
        <fullName>Homeobox protein SMOX-1</fullName>
    </recommendedName>
</protein>
<proteinExistence type="evidence at transcript level"/>
<sequence length="280" mass="32194">NSNNINLSYDDQQRLIYSGTEQKYPTSNQLKSYPNGLLNPFNGTNFMHPTIQSNSLITRHPNNNSFQLNTTNDSNNNNTTNNGNDSRSHLYDISTFNAQNPYSLTNTLNFNSRTMNNQLTMNDSMKLNGNLTLHDTNYHALLNGSTSFGSTVFRSLVNSENQSYLNSSTNMLMNSSLDNINNSNDHSTLNDNNNDCIGQSLRQSGNSSESNVVVYPWMNPKGTDISVDQKRTRQTYTRYQTLELEKEFHFNKYLTRRRRIEIAHTLTLTERQIKIWFQNR</sequence>
<gene>
    <name type="primary">SMOX-1</name>
</gene>
<keyword id="KW-0238">DNA-binding</keyword>
<keyword id="KW-0371">Homeobox</keyword>
<keyword id="KW-0539">Nucleus</keyword>
<keyword id="KW-1185">Reference proteome</keyword>
<accession>Q26600</accession>
<comment type="subcellular location">
    <subcellularLocation>
        <location evidence="1">Nucleus</location>
    </subcellularLocation>
</comment>
<comment type="similarity">
    <text evidence="3">Belongs to the Antp homeobox family.</text>
</comment>